<keyword id="KW-0028">Amino-acid biosynthesis</keyword>
<keyword id="KW-0067">ATP-binding</keyword>
<keyword id="KW-0963">Cytoplasm</keyword>
<keyword id="KW-0418">Kinase</keyword>
<keyword id="KW-0547">Nucleotide-binding</keyword>
<keyword id="KW-0641">Proline biosynthesis</keyword>
<keyword id="KW-0808">Transferase</keyword>
<gene>
    <name evidence="1" type="primary">proB</name>
    <name type="ordered locus">A1S_2497</name>
</gene>
<protein>
    <recommendedName>
        <fullName evidence="1">Glutamate 5-kinase</fullName>
        <ecNumber evidence="1">2.7.2.11</ecNumber>
    </recommendedName>
    <alternativeName>
        <fullName evidence="1">Gamma-glutamyl kinase</fullName>
        <shortName evidence="1">GK</shortName>
    </alternativeName>
</protein>
<feature type="chain" id="PRO_1000125206" description="Glutamate 5-kinase">
    <location>
        <begin position="1"/>
        <end position="377"/>
    </location>
</feature>
<feature type="domain" description="PUA" evidence="1">
    <location>
        <begin position="285"/>
        <end position="363"/>
    </location>
</feature>
<feature type="binding site" evidence="1">
    <location>
        <position position="20"/>
    </location>
    <ligand>
        <name>ATP</name>
        <dbReference type="ChEBI" id="CHEBI:30616"/>
    </ligand>
</feature>
<feature type="binding site" evidence="1">
    <location>
        <position position="60"/>
    </location>
    <ligand>
        <name>substrate</name>
    </ligand>
</feature>
<feature type="binding site" evidence="1">
    <location>
        <position position="147"/>
    </location>
    <ligand>
        <name>substrate</name>
    </ligand>
</feature>
<feature type="binding site" evidence="1">
    <location>
        <position position="159"/>
    </location>
    <ligand>
        <name>substrate</name>
    </ligand>
</feature>
<feature type="binding site" evidence="1">
    <location>
        <begin position="179"/>
        <end position="180"/>
    </location>
    <ligand>
        <name>ATP</name>
        <dbReference type="ChEBI" id="CHEBI:30616"/>
    </ligand>
</feature>
<evidence type="ECO:0000255" key="1">
    <source>
        <dbReference type="HAMAP-Rule" id="MF_00456"/>
    </source>
</evidence>
<dbReference type="EC" id="2.7.2.11" evidence="1"/>
<dbReference type="EMBL" id="CP000521">
    <property type="protein sequence ID" value="ABO12915.2"/>
    <property type="molecule type" value="Genomic_DNA"/>
</dbReference>
<dbReference type="RefSeq" id="WP_000573844.1">
    <property type="nucleotide sequence ID" value="NZ_CP053098.1"/>
</dbReference>
<dbReference type="SMR" id="A3M7M1"/>
<dbReference type="GeneID" id="92894804"/>
<dbReference type="KEGG" id="acb:A1S_2497"/>
<dbReference type="HOGENOM" id="CLU_025400_2_0_6"/>
<dbReference type="UniPathway" id="UPA00098">
    <property type="reaction ID" value="UER00359"/>
</dbReference>
<dbReference type="GO" id="GO:0005829">
    <property type="term" value="C:cytosol"/>
    <property type="evidence" value="ECO:0007669"/>
    <property type="project" value="TreeGrafter"/>
</dbReference>
<dbReference type="GO" id="GO:0005524">
    <property type="term" value="F:ATP binding"/>
    <property type="evidence" value="ECO:0007669"/>
    <property type="project" value="UniProtKB-KW"/>
</dbReference>
<dbReference type="GO" id="GO:0004349">
    <property type="term" value="F:glutamate 5-kinase activity"/>
    <property type="evidence" value="ECO:0007669"/>
    <property type="project" value="UniProtKB-UniRule"/>
</dbReference>
<dbReference type="GO" id="GO:0003723">
    <property type="term" value="F:RNA binding"/>
    <property type="evidence" value="ECO:0007669"/>
    <property type="project" value="InterPro"/>
</dbReference>
<dbReference type="GO" id="GO:0055129">
    <property type="term" value="P:L-proline biosynthetic process"/>
    <property type="evidence" value="ECO:0007669"/>
    <property type="project" value="UniProtKB-UniRule"/>
</dbReference>
<dbReference type="CDD" id="cd04242">
    <property type="entry name" value="AAK_G5K_ProB"/>
    <property type="match status" value="1"/>
</dbReference>
<dbReference type="CDD" id="cd21157">
    <property type="entry name" value="PUA_G5K"/>
    <property type="match status" value="1"/>
</dbReference>
<dbReference type="FunFam" id="3.40.1160.10:FF:000018">
    <property type="entry name" value="Glutamate 5-kinase"/>
    <property type="match status" value="1"/>
</dbReference>
<dbReference type="Gene3D" id="3.40.1160.10">
    <property type="entry name" value="Acetylglutamate kinase-like"/>
    <property type="match status" value="2"/>
</dbReference>
<dbReference type="Gene3D" id="2.30.130.10">
    <property type="entry name" value="PUA domain"/>
    <property type="match status" value="1"/>
</dbReference>
<dbReference type="HAMAP" id="MF_00456">
    <property type="entry name" value="ProB"/>
    <property type="match status" value="1"/>
</dbReference>
<dbReference type="InterPro" id="IPR036393">
    <property type="entry name" value="AceGlu_kinase-like_sf"/>
</dbReference>
<dbReference type="InterPro" id="IPR001048">
    <property type="entry name" value="Asp/Glu/Uridylate_kinase"/>
</dbReference>
<dbReference type="InterPro" id="IPR041739">
    <property type="entry name" value="G5K_ProB"/>
</dbReference>
<dbReference type="InterPro" id="IPR001057">
    <property type="entry name" value="Glu/AcGlu_kinase"/>
</dbReference>
<dbReference type="InterPro" id="IPR011529">
    <property type="entry name" value="Glu_5kinase"/>
</dbReference>
<dbReference type="InterPro" id="IPR005715">
    <property type="entry name" value="Glu_5kinase/COase_Synthase"/>
</dbReference>
<dbReference type="InterPro" id="IPR019797">
    <property type="entry name" value="Glutamate_5-kinase_CS"/>
</dbReference>
<dbReference type="InterPro" id="IPR002478">
    <property type="entry name" value="PUA"/>
</dbReference>
<dbReference type="InterPro" id="IPR015947">
    <property type="entry name" value="PUA-like_sf"/>
</dbReference>
<dbReference type="InterPro" id="IPR036974">
    <property type="entry name" value="PUA_sf"/>
</dbReference>
<dbReference type="NCBIfam" id="TIGR01027">
    <property type="entry name" value="proB"/>
    <property type="match status" value="1"/>
</dbReference>
<dbReference type="PANTHER" id="PTHR43654">
    <property type="entry name" value="GLUTAMATE 5-KINASE"/>
    <property type="match status" value="1"/>
</dbReference>
<dbReference type="PANTHER" id="PTHR43654:SF1">
    <property type="entry name" value="ISOPENTENYL PHOSPHATE KINASE"/>
    <property type="match status" value="1"/>
</dbReference>
<dbReference type="Pfam" id="PF00696">
    <property type="entry name" value="AA_kinase"/>
    <property type="match status" value="1"/>
</dbReference>
<dbReference type="Pfam" id="PF01472">
    <property type="entry name" value="PUA"/>
    <property type="match status" value="1"/>
</dbReference>
<dbReference type="PIRSF" id="PIRSF000729">
    <property type="entry name" value="GK"/>
    <property type="match status" value="1"/>
</dbReference>
<dbReference type="PRINTS" id="PR00474">
    <property type="entry name" value="GLU5KINASE"/>
</dbReference>
<dbReference type="SMART" id="SM00359">
    <property type="entry name" value="PUA"/>
    <property type="match status" value="1"/>
</dbReference>
<dbReference type="SUPFAM" id="SSF53633">
    <property type="entry name" value="Carbamate kinase-like"/>
    <property type="match status" value="1"/>
</dbReference>
<dbReference type="SUPFAM" id="SSF88697">
    <property type="entry name" value="PUA domain-like"/>
    <property type="match status" value="1"/>
</dbReference>
<dbReference type="PROSITE" id="PS00902">
    <property type="entry name" value="GLUTAMATE_5_KINASE"/>
    <property type="match status" value="1"/>
</dbReference>
<dbReference type="PROSITE" id="PS50890">
    <property type="entry name" value="PUA"/>
    <property type="match status" value="1"/>
</dbReference>
<comment type="function">
    <text evidence="1">Catalyzes the transfer of a phosphate group to glutamate to form L-glutamate 5-phosphate.</text>
</comment>
<comment type="catalytic activity">
    <reaction evidence="1">
        <text>L-glutamate + ATP = L-glutamyl 5-phosphate + ADP</text>
        <dbReference type="Rhea" id="RHEA:14877"/>
        <dbReference type="ChEBI" id="CHEBI:29985"/>
        <dbReference type="ChEBI" id="CHEBI:30616"/>
        <dbReference type="ChEBI" id="CHEBI:58274"/>
        <dbReference type="ChEBI" id="CHEBI:456216"/>
        <dbReference type="EC" id="2.7.2.11"/>
    </reaction>
</comment>
<comment type="pathway">
    <text evidence="1">Amino-acid biosynthesis; L-proline biosynthesis; L-glutamate 5-semialdehyde from L-glutamate: step 1/2.</text>
</comment>
<comment type="subcellular location">
    <subcellularLocation>
        <location evidence="1">Cytoplasm</location>
    </subcellularLocation>
</comment>
<comment type="similarity">
    <text evidence="1">Belongs to the glutamate 5-kinase family.</text>
</comment>
<name>PROB_ACIBT</name>
<proteinExistence type="inferred from homology"/>
<organism>
    <name type="scientific">Acinetobacter baumannii (strain ATCC 17978 / DSM 105126 / CIP 53.77 / LMG 1025 / NCDC KC755 / 5377)</name>
    <dbReference type="NCBI Taxonomy" id="400667"/>
    <lineage>
        <taxon>Bacteria</taxon>
        <taxon>Pseudomonadati</taxon>
        <taxon>Pseudomonadota</taxon>
        <taxon>Gammaproteobacteria</taxon>
        <taxon>Moraxellales</taxon>
        <taxon>Moraxellaceae</taxon>
        <taxon>Acinetobacter</taxon>
        <taxon>Acinetobacter calcoaceticus/baumannii complex</taxon>
    </lineage>
</organism>
<reference key="1">
    <citation type="journal article" date="2007" name="Genes Dev.">
        <title>New insights into Acinetobacter baumannii pathogenesis revealed by high-density pyrosequencing and transposon mutagenesis.</title>
        <authorList>
            <person name="Smith M.G."/>
            <person name="Gianoulis T.A."/>
            <person name="Pukatzki S."/>
            <person name="Mekalanos J.J."/>
            <person name="Ornston L.N."/>
            <person name="Gerstein M."/>
            <person name="Snyder M."/>
        </authorList>
    </citation>
    <scope>NUCLEOTIDE SEQUENCE [LARGE SCALE GENOMIC DNA]</scope>
    <source>
        <strain>ATCC 17978 / DSM 105126 / CIP 53.77 / LMG 1025 / NCDC KC755 / 5377</strain>
    </source>
</reference>
<sequence>MIEVVDGQRKLSECKRIVVKIGSSLLTANGQGLDLDAISHWAKQIADLHNAGHEIILVSSGAVAEGMVRMKLASRPTDLPSLQACAAIGQMGLIHTWSSVLENHSIRTAQVLLTHDDLADRRRYLNSCDALQNLIDWRVIPVINENDTVSTDEIRFGDNDTLAAMVAGQVHADLLIILTDQQGMFDSDPRHNPDAKLLSTVRAMDDVLFEMAGGGGVLGRGGMVTKVRAARLAAKSGCPTLIASGESDNVLSRVMAGEMLGTLFTTDKDRMTAHQQWLAAHLQTAGRLVIDDGAVEAIKLKHRSLLPVGVKTVEGHFDRGDVVECVDKQGKRVAVGRVNFSSRSAEIIKGLSSDKVYQVLGEARSLEMIHRDHMAIY</sequence>
<accession>A3M7M1</accession>